<sequence length="210" mass="23631">MSQLQDSSIRQSDPDSDLDSDSNSNSDLGSLVDQGNAQFEDEYIATEEQTNLEPKVPLSTSIVLDKLPQDQQSQLNHNPYLKSEQKSQSREGTKFRMETVLPKKTTEKNENQHSSASTTKSPEKVTIRFQPIGSTTAIHPKVFKISSVQSILTVNRFLSQKLKNNERQPLHLYIQNSFLPSPDERVGDLYALFATNHELIISYCNTIAFG</sequence>
<organism>
    <name type="scientific">Lodderomyces elongisporus (strain ATCC 11503 / CBS 2605 / JCM 1781 / NBRC 1676 / NRRL YB-4239)</name>
    <name type="common">Yeast</name>
    <name type="synonym">Saccharomyces elongisporus</name>
    <dbReference type="NCBI Taxonomy" id="379508"/>
    <lineage>
        <taxon>Eukaryota</taxon>
        <taxon>Fungi</taxon>
        <taxon>Dikarya</taxon>
        <taxon>Ascomycota</taxon>
        <taxon>Saccharomycotina</taxon>
        <taxon>Pichiomycetes</taxon>
        <taxon>Debaryomycetaceae</taxon>
        <taxon>Candida/Lodderomyces clade</taxon>
        <taxon>Lodderomyces</taxon>
    </lineage>
</organism>
<feature type="chain" id="PRO_0000317934" description="Ubiquitin-like protein ATG12">
    <location>
        <begin position="1"/>
        <end position="210"/>
    </location>
</feature>
<feature type="region of interest" description="Disordered" evidence="2">
    <location>
        <begin position="1"/>
        <end position="57"/>
    </location>
</feature>
<feature type="region of interest" description="Disordered" evidence="2">
    <location>
        <begin position="70"/>
        <end position="123"/>
    </location>
</feature>
<feature type="compositionally biased region" description="Polar residues" evidence="2">
    <location>
        <begin position="1"/>
        <end position="11"/>
    </location>
</feature>
<feature type="compositionally biased region" description="Low complexity" evidence="2">
    <location>
        <begin position="21"/>
        <end position="33"/>
    </location>
</feature>
<feature type="compositionally biased region" description="Polar residues" evidence="2">
    <location>
        <begin position="47"/>
        <end position="57"/>
    </location>
</feature>
<feature type="compositionally biased region" description="Basic and acidic residues" evidence="2">
    <location>
        <begin position="83"/>
        <end position="97"/>
    </location>
</feature>
<feature type="cross-link" description="Glycyl lysine isopeptide (Gly-Lys) (interchain with K-160 in ATG5)" evidence="1">
    <location>
        <position position="210"/>
    </location>
</feature>
<dbReference type="EMBL" id="CH981527">
    <property type="protein sequence ID" value="EDK45259.1"/>
    <property type="molecule type" value="Genomic_DNA"/>
</dbReference>
<dbReference type="RefSeq" id="XP_001525510.1">
    <property type="nucleotide sequence ID" value="XM_001525460.1"/>
</dbReference>
<dbReference type="SMR" id="A5E1F1"/>
<dbReference type="FunCoup" id="A5E1F1">
    <property type="interactions" value="154"/>
</dbReference>
<dbReference type="STRING" id="379508.A5E1F1"/>
<dbReference type="GeneID" id="5232424"/>
<dbReference type="KEGG" id="lel:PVL30_002931"/>
<dbReference type="VEuPathDB" id="FungiDB:LELG_03438"/>
<dbReference type="eggNOG" id="KOG3439">
    <property type="taxonomic scope" value="Eukaryota"/>
</dbReference>
<dbReference type="HOGENOM" id="CLU_106795_0_1_1"/>
<dbReference type="InParanoid" id="A5E1F1"/>
<dbReference type="OrthoDB" id="10003551at2759"/>
<dbReference type="Proteomes" id="UP000001996">
    <property type="component" value="Unassembled WGS sequence"/>
</dbReference>
<dbReference type="GO" id="GO:0034274">
    <property type="term" value="C:Atg12-Atg5-Atg16 complex"/>
    <property type="evidence" value="ECO:0007669"/>
    <property type="project" value="TreeGrafter"/>
</dbReference>
<dbReference type="GO" id="GO:0000421">
    <property type="term" value="C:autophagosome membrane"/>
    <property type="evidence" value="ECO:0007669"/>
    <property type="project" value="TreeGrafter"/>
</dbReference>
<dbReference type="GO" id="GO:0034045">
    <property type="term" value="C:phagophore assembly site membrane"/>
    <property type="evidence" value="ECO:0007669"/>
    <property type="project" value="UniProtKB-SubCell"/>
</dbReference>
<dbReference type="GO" id="GO:0019776">
    <property type="term" value="F:Atg8-family ligase activity"/>
    <property type="evidence" value="ECO:0007669"/>
    <property type="project" value="TreeGrafter"/>
</dbReference>
<dbReference type="GO" id="GO:0000045">
    <property type="term" value="P:autophagosome assembly"/>
    <property type="evidence" value="ECO:0007669"/>
    <property type="project" value="InterPro"/>
</dbReference>
<dbReference type="GO" id="GO:0097352">
    <property type="term" value="P:autophagosome maturation"/>
    <property type="evidence" value="ECO:0007669"/>
    <property type="project" value="TreeGrafter"/>
</dbReference>
<dbReference type="GO" id="GO:0000422">
    <property type="term" value="P:autophagy of mitochondrion"/>
    <property type="evidence" value="ECO:0007669"/>
    <property type="project" value="TreeGrafter"/>
</dbReference>
<dbReference type="GO" id="GO:0061723">
    <property type="term" value="P:glycophagy"/>
    <property type="evidence" value="ECO:0007669"/>
    <property type="project" value="TreeGrafter"/>
</dbReference>
<dbReference type="GO" id="GO:0034727">
    <property type="term" value="P:piecemeal microautophagy of the nucleus"/>
    <property type="evidence" value="ECO:0007669"/>
    <property type="project" value="TreeGrafter"/>
</dbReference>
<dbReference type="GO" id="GO:0015031">
    <property type="term" value="P:protein transport"/>
    <property type="evidence" value="ECO:0007669"/>
    <property type="project" value="UniProtKB-KW"/>
</dbReference>
<dbReference type="CDD" id="cd01612">
    <property type="entry name" value="Ubl_ATG12"/>
    <property type="match status" value="1"/>
</dbReference>
<dbReference type="Gene3D" id="3.10.20.90">
    <property type="entry name" value="Phosphatidylinositol 3-kinase Catalytic Subunit, Chain A, domain 1"/>
    <property type="match status" value="1"/>
</dbReference>
<dbReference type="InterPro" id="IPR007242">
    <property type="entry name" value="Atg12"/>
</dbReference>
<dbReference type="InterPro" id="IPR029071">
    <property type="entry name" value="Ubiquitin-like_domsf"/>
</dbReference>
<dbReference type="PANTHER" id="PTHR13385">
    <property type="entry name" value="AUTOPHAGY PROTEIN 12"/>
    <property type="match status" value="1"/>
</dbReference>
<dbReference type="PANTHER" id="PTHR13385:SF0">
    <property type="entry name" value="UBIQUITIN-LIKE PROTEIN ATG12"/>
    <property type="match status" value="1"/>
</dbReference>
<dbReference type="Pfam" id="PF04110">
    <property type="entry name" value="APG12"/>
    <property type="match status" value="1"/>
</dbReference>
<dbReference type="SUPFAM" id="SSF54236">
    <property type="entry name" value="Ubiquitin-like"/>
    <property type="match status" value="1"/>
</dbReference>
<evidence type="ECO:0000250" key="1"/>
<evidence type="ECO:0000256" key="2">
    <source>
        <dbReference type="SAM" id="MobiDB-lite"/>
    </source>
</evidence>
<evidence type="ECO:0000305" key="3"/>
<reference key="1">
    <citation type="journal article" date="2009" name="Nature">
        <title>Evolution of pathogenicity and sexual reproduction in eight Candida genomes.</title>
        <authorList>
            <person name="Butler G."/>
            <person name="Rasmussen M.D."/>
            <person name="Lin M.F."/>
            <person name="Santos M.A.S."/>
            <person name="Sakthikumar S."/>
            <person name="Munro C.A."/>
            <person name="Rheinbay E."/>
            <person name="Grabherr M."/>
            <person name="Forche A."/>
            <person name="Reedy J.L."/>
            <person name="Agrafioti I."/>
            <person name="Arnaud M.B."/>
            <person name="Bates S."/>
            <person name="Brown A.J.P."/>
            <person name="Brunke S."/>
            <person name="Costanzo M.C."/>
            <person name="Fitzpatrick D.A."/>
            <person name="de Groot P.W.J."/>
            <person name="Harris D."/>
            <person name="Hoyer L.L."/>
            <person name="Hube B."/>
            <person name="Klis F.M."/>
            <person name="Kodira C."/>
            <person name="Lennard N."/>
            <person name="Logue M.E."/>
            <person name="Martin R."/>
            <person name="Neiman A.M."/>
            <person name="Nikolaou E."/>
            <person name="Quail M.A."/>
            <person name="Quinn J."/>
            <person name="Santos M.C."/>
            <person name="Schmitzberger F.F."/>
            <person name="Sherlock G."/>
            <person name="Shah P."/>
            <person name="Silverstein K.A.T."/>
            <person name="Skrzypek M.S."/>
            <person name="Soll D."/>
            <person name="Staggs R."/>
            <person name="Stansfield I."/>
            <person name="Stumpf M.P.H."/>
            <person name="Sudbery P.E."/>
            <person name="Srikantha T."/>
            <person name="Zeng Q."/>
            <person name="Berman J."/>
            <person name="Berriman M."/>
            <person name="Heitman J."/>
            <person name="Gow N.A.R."/>
            <person name="Lorenz M.C."/>
            <person name="Birren B.W."/>
            <person name="Kellis M."/>
            <person name="Cuomo C.A."/>
        </authorList>
    </citation>
    <scope>NUCLEOTIDE SEQUENCE [LARGE SCALE GENOMIC DNA]</scope>
    <source>
        <strain>ATCC 11503 / BCRC 21390 / CBS 2605 / JCM 1781 / NBRC 1676 / NRRL YB-4239</strain>
    </source>
</reference>
<proteinExistence type="inferred from homology"/>
<accession>A5E1F1</accession>
<protein>
    <recommendedName>
        <fullName>Ubiquitin-like protein ATG12</fullName>
    </recommendedName>
    <alternativeName>
        <fullName>Autophagy-related protein 12</fullName>
    </alternativeName>
</protein>
<comment type="function">
    <text evidence="1">Ubiquitin-like protein involved in cytoplasm to vacuole transport (Cvt), autophagy vesicles formation, mitophagy, and nucleophagy. Conjugation with ATG5 through a ubiquitin-like conjugating system involving also ATG7 as an E1-like activating enzyme and ATG10 as an E2-like conjugating enzyme, is essential for its function. The ATG12-ATG5 conjugate functions as an E3-like enzyme which is required for lipidation of ATG8 and ATG8 association to the vesicle membranes (By similarity).</text>
</comment>
<comment type="subunit">
    <text evidence="1">Forms a conjugate with ATG5.</text>
</comment>
<comment type="subcellular location">
    <subcellularLocation>
        <location evidence="1">Preautophagosomal structure membrane</location>
        <topology evidence="1">Peripheral membrane protein</topology>
    </subcellularLocation>
</comment>
<comment type="similarity">
    <text evidence="3">Belongs to the ATG12 family.</text>
</comment>
<gene>
    <name type="primary">ATG12</name>
    <name type="ORF">LELG_03438</name>
</gene>
<keyword id="KW-0072">Autophagy</keyword>
<keyword id="KW-1017">Isopeptide bond</keyword>
<keyword id="KW-0472">Membrane</keyword>
<keyword id="KW-0653">Protein transport</keyword>
<keyword id="KW-1185">Reference proteome</keyword>
<keyword id="KW-0813">Transport</keyword>
<keyword id="KW-0833">Ubl conjugation pathway</keyword>
<name>ATG12_LODEL</name>